<sequence>MGDVLISDRPPSPARLSHTSEKHPRVTLTELNVLRRHRELCDVVINVSGRKIFAHRVILSACSPYFRAMFTGELEESRQTEVTIRDIDENAMELLIDFCYTSHIVVEESNVQTLLPAACLLQLAEIQDICCEFLKRQLDPTNCLGIRAFADTHSCRELLRIADKFTQHNFQEVMESEEFLLLPVGQLVDIICSDELNVRSEEQVFNAVMAWLKYNVAERRQHLAQVLQHVRMPLLSPKFLVGTVGSDLLVRSDEACRDLVDEAKNYLLLPQERPLMQGPRTRPRKPTRRGEVLFAVGGWCSGDAIASVERFDPETADWKMVAPMSKRRCGVGVAVLNDLLYAVGGHDGQSYLNSIERYDPQTNQWSCDVAPTTSCRTSVGVAVLDGFLYAVGGQDGVQCLNHVERYDPKENKWSKVAPMTTRRLGVAVAVLGGYLYAIGGSDGQCPLNTVERYDPRQNKWCAVSPMSTRRKHLGCAVFNNFIYAVGGRDDCMELSSAERYNPHTNSWSPIVAMTSRRSGVGLAVVNGQLYAVGGFDGTAYLKTIEVYDPETNQWRLCGCMNYRRLGGGVGVMRAPQTENYMWIRKDSVV</sequence>
<gene>
    <name evidence="1" type="primary">dbo</name>
    <name type="ORF">AAEL010911</name>
</gene>
<proteinExistence type="inferred from homology"/>
<dbReference type="EMBL" id="CH477704">
    <property type="protein sequence ID" value="EAT37050.1"/>
    <property type="molecule type" value="Genomic_DNA"/>
</dbReference>
<dbReference type="SMR" id="Q16RL8"/>
<dbReference type="FunCoup" id="Q16RL8">
    <property type="interactions" value="1785"/>
</dbReference>
<dbReference type="STRING" id="7159.Q16RL8"/>
<dbReference type="PaxDb" id="7159-AAEL010911-PA"/>
<dbReference type="EnsemblMetazoa" id="AAEL010911-RA">
    <property type="protein sequence ID" value="AAEL010911-PA"/>
    <property type="gene ID" value="AAEL010911"/>
</dbReference>
<dbReference type="GeneID" id="5574073"/>
<dbReference type="KEGG" id="aag:5574073"/>
<dbReference type="CTD" id="53556"/>
<dbReference type="VEuPathDB" id="VectorBase:AAEL010911"/>
<dbReference type="eggNOG" id="KOG4441">
    <property type="taxonomic scope" value="Eukaryota"/>
</dbReference>
<dbReference type="HOGENOM" id="CLU_004253_12_0_1"/>
<dbReference type="InParanoid" id="Q16RL8"/>
<dbReference type="OMA" id="CAVFNNL"/>
<dbReference type="OrthoDB" id="45365at2759"/>
<dbReference type="PhylomeDB" id="Q16RL8"/>
<dbReference type="UniPathway" id="UPA00143"/>
<dbReference type="Proteomes" id="UP000008820">
    <property type="component" value="Chromosome 3"/>
</dbReference>
<dbReference type="Proteomes" id="UP000682892">
    <property type="component" value="Unassembled WGS sequence"/>
</dbReference>
<dbReference type="GO" id="GO:0003779">
    <property type="term" value="F:actin binding"/>
    <property type="evidence" value="ECO:0007669"/>
    <property type="project" value="UniProtKB-KW"/>
</dbReference>
<dbReference type="GO" id="GO:0045886">
    <property type="term" value="P:negative regulation of synaptic assembly at neuromuscular junction"/>
    <property type="evidence" value="ECO:0000250"/>
    <property type="project" value="UniProtKB"/>
</dbReference>
<dbReference type="GO" id="GO:0016567">
    <property type="term" value="P:protein ubiquitination"/>
    <property type="evidence" value="ECO:0007669"/>
    <property type="project" value="UniProtKB-UniPathway"/>
</dbReference>
<dbReference type="CDD" id="cd18459">
    <property type="entry name" value="BACK_KLHL20"/>
    <property type="match status" value="1"/>
</dbReference>
<dbReference type="CDD" id="cd18249">
    <property type="entry name" value="BTB_POZ_KLHL20_KLEIP"/>
    <property type="match status" value="1"/>
</dbReference>
<dbReference type="FunFam" id="1.25.40.420:FF:000001">
    <property type="entry name" value="Kelch-like family member 12"/>
    <property type="match status" value="1"/>
</dbReference>
<dbReference type="FunFam" id="2.120.10.80:FF:000006">
    <property type="entry name" value="Kelch-like family member 20"/>
    <property type="match status" value="1"/>
</dbReference>
<dbReference type="FunFam" id="3.30.710.10:FF:000001">
    <property type="entry name" value="Kelch-like family member 20"/>
    <property type="match status" value="1"/>
</dbReference>
<dbReference type="Gene3D" id="1.25.40.420">
    <property type="match status" value="1"/>
</dbReference>
<dbReference type="Gene3D" id="2.120.10.80">
    <property type="entry name" value="Kelch-type beta propeller"/>
    <property type="match status" value="1"/>
</dbReference>
<dbReference type="Gene3D" id="3.30.710.10">
    <property type="entry name" value="Potassium Channel Kv1.1, Chain A"/>
    <property type="match status" value="1"/>
</dbReference>
<dbReference type="InterPro" id="IPR011705">
    <property type="entry name" value="BACK"/>
</dbReference>
<dbReference type="InterPro" id="IPR017096">
    <property type="entry name" value="BTB-kelch_protein"/>
</dbReference>
<dbReference type="InterPro" id="IPR000210">
    <property type="entry name" value="BTB/POZ_dom"/>
</dbReference>
<dbReference type="InterPro" id="IPR011043">
    <property type="entry name" value="Gal_Oxase/kelch_b-propeller"/>
</dbReference>
<dbReference type="InterPro" id="IPR015915">
    <property type="entry name" value="Kelch-typ_b-propeller"/>
</dbReference>
<dbReference type="InterPro" id="IPR006652">
    <property type="entry name" value="Kelch_1"/>
</dbReference>
<dbReference type="InterPro" id="IPR011333">
    <property type="entry name" value="SKP1/BTB/POZ_sf"/>
</dbReference>
<dbReference type="PANTHER" id="PTHR24412">
    <property type="entry name" value="KELCH PROTEIN"/>
    <property type="match status" value="1"/>
</dbReference>
<dbReference type="PANTHER" id="PTHR24412:SF451">
    <property type="entry name" value="KELCH-LIKE PROTEIN 20"/>
    <property type="match status" value="1"/>
</dbReference>
<dbReference type="Pfam" id="PF07707">
    <property type="entry name" value="BACK"/>
    <property type="match status" value="1"/>
</dbReference>
<dbReference type="Pfam" id="PF00651">
    <property type="entry name" value="BTB"/>
    <property type="match status" value="1"/>
</dbReference>
<dbReference type="Pfam" id="PF01344">
    <property type="entry name" value="Kelch_1"/>
    <property type="match status" value="6"/>
</dbReference>
<dbReference type="PIRSF" id="PIRSF037037">
    <property type="entry name" value="Kelch-like_protein_gigaxonin"/>
    <property type="match status" value="1"/>
</dbReference>
<dbReference type="SMART" id="SM00875">
    <property type="entry name" value="BACK"/>
    <property type="match status" value="1"/>
</dbReference>
<dbReference type="SMART" id="SM00225">
    <property type="entry name" value="BTB"/>
    <property type="match status" value="1"/>
</dbReference>
<dbReference type="SMART" id="SM00612">
    <property type="entry name" value="Kelch"/>
    <property type="match status" value="6"/>
</dbReference>
<dbReference type="SUPFAM" id="SSF50965">
    <property type="entry name" value="Galactose oxidase, central domain"/>
    <property type="match status" value="1"/>
</dbReference>
<dbReference type="SUPFAM" id="SSF117281">
    <property type="entry name" value="Kelch motif"/>
    <property type="match status" value="1"/>
</dbReference>
<dbReference type="SUPFAM" id="SSF54695">
    <property type="entry name" value="POZ domain"/>
    <property type="match status" value="1"/>
</dbReference>
<dbReference type="PROSITE" id="PS50097">
    <property type="entry name" value="BTB"/>
    <property type="match status" value="1"/>
</dbReference>
<name>KLHDB_AEDAE</name>
<accession>Q16RL8</accession>
<comment type="function">
    <text evidence="1 2">Probable substrate-specific adapter of an E3 ubiquitin-protein ligase complex which mediates the ubiquitination and subsequent proteasomal degradation of target proteins. May have a role in synapse differentiation and growth (By similarity).</text>
</comment>
<comment type="pathway">
    <text evidence="2">Protein modification; protein ubiquitination.</text>
</comment>
<protein>
    <recommendedName>
        <fullName evidence="1">Kelch-like protein diablo</fullName>
    </recommendedName>
</protein>
<keyword id="KW-0009">Actin-binding</keyword>
<keyword id="KW-0880">Kelch repeat</keyword>
<keyword id="KW-1185">Reference proteome</keyword>
<keyword id="KW-0677">Repeat</keyword>
<keyword id="KW-0833">Ubl conjugation pathway</keyword>
<reference evidence="6" key="1">
    <citation type="journal article" date="2007" name="Science">
        <title>Genome sequence of Aedes aegypti, a major arbovirus vector.</title>
        <authorList>
            <person name="Nene V."/>
            <person name="Wortman J.R."/>
            <person name="Lawson D."/>
            <person name="Haas B.J."/>
            <person name="Kodira C.D."/>
            <person name="Tu Z.J."/>
            <person name="Loftus B.J."/>
            <person name="Xi Z."/>
            <person name="Megy K."/>
            <person name="Grabherr M."/>
            <person name="Ren Q."/>
            <person name="Zdobnov E.M."/>
            <person name="Lobo N.F."/>
            <person name="Campbell K.S."/>
            <person name="Brown S.E."/>
            <person name="Bonaldo M.F."/>
            <person name="Zhu J."/>
            <person name="Sinkins S.P."/>
            <person name="Hogenkamp D.G."/>
            <person name="Amedeo P."/>
            <person name="Arensburger P."/>
            <person name="Atkinson P.W."/>
            <person name="Bidwell S.L."/>
            <person name="Biedler J."/>
            <person name="Birney E."/>
            <person name="Bruggner R.V."/>
            <person name="Costas J."/>
            <person name="Coy M.R."/>
            <person name="Crabtree J."/>
            <person name="Crawford M."/>
            <person name="DeBruyn B."/>
            <person name="DeCaprio D."/>
            <person name="Eiglmeier K."/>
            <person name="Eisenstadt E."/>
            <person name="El-Dorry H."/>
            <person name="Gelbart W.M."/>
            <person name="Gomes S.L."/>
            <person name="Hammond M."/>
            <person name="Hannick L.I."/>
            <person name="Hogan J.R."/>
            <person name="Holmes M.H."/>
            <person name="Jaffe D."/>
            <person name="Johnston S.J."/>
            <person name="Kennedy R.C."/>
            <person name="Koo H."/>
            <person name="Kravitz S."/>
            <person name="Kriventseva E.V."/>
            <person name="Kulp D."/>
            <person name="Labutti K."/>
            <person name="Lee E."/>
            <person name="Li S."/>
            <person name="Lovin D.D."/>
            <person name="Mao C."/>
            <person name="Mauceli E."/>
            <person name="Menck C.F."/>
            <person name="Miller J.R."/>
            <person name="Montgomery P."/>
            <person name="Mori A."/>
            <person name="Nascimento A.L."/>
            <person name="Naveira H.F."/>
            <person name="Nusbaum C."/>
            <person name="O'Leary S.B."/>
            <person name="Orvis J."/>
            <person name="Pertea M."/>
            <person name="Quesneville H."/>
            <person name="Reidenbach K.R."/>
            <person name="Rogers Y.-H.C."/>
            <person name="Roth C.W."/>
            <person name="Schneider J.R."/>
            <person name="Schatz M."/>
            <person name="Shumway M."/>
            <person name="Stanke M."/>
            <person name="Stinson E.O."/>
            <person name="Tubio J.M.C."/>
            <person name="Vanzee J.P."/>
            <person name="Verjovski-Almeida S."/>
            <person name="Werner D."/>
            <person name="White O.R."/>
            <person name="Wyder S."/>
            <person name="Zeng Q."/>
            <person name="Zhao Q."/>
            <person name="Zhao Y."/>
            <person name="Hill C.A."/>
            <person name="Raikhel A.S."/>
            <person name="Soares M.B."/>
            <person name="Knudson D.L."/>
            <person name="Lee N.H."/>
            <person name="Galagan J."/>
            <person name="Salzberg S.L."/>
            <person name="Paulsen I.T."/>
            <person name="Dimopoulos G."/>
            <person name="Collins F.H."/>
            <person name="Bruce B."/>
            <person name="Fraser-Liggett C.M."/>
            <person name="Severson D.W."/>
        </authorList>
    </citation>
    <scope>NUCLEOTIDE SEQUENCE [LARGE SCALE GENOMIC DNA]</scope>
    <source>
        <strain>LVPib12</strain>
    </source>
</reference>
<evidence type="ECO:0000250" key="1">
    <source>
        <dbReference type="UniProtKB" id="Q9VUU5"/>
    </source>
</evidence>
<evidence type="ECO:0000250" key="2">
    <source>
        <dbReference type="UniProtKB" id="Q9Y2M5"/>
    </source>
</evidence>
<evidence type="ECO:0000255" key="3"/>
<evidence type="ECO:0000255" key="4">
    <source>
        <dbReference type="PROSITE-ProRule" id="PRU00037"/>
    </source>
</evidence>
<evidence type="ECO:0000256" key="5">
    <source>
        <dbReference type="SAM" id="MobiDB-lite"/>
    </source>
</evidence>
<evidence type="ECO:0000312" key="6">
    <source>
        <dbReference type="EMBL" id="EAT37050.1"/>
    </source>
</evidence>
<feature type="chain" id="PRO_0000379942" description="Kelch-like protein diablo">
    <location>
        <begin position="1"/>
        <end position="589"/>
    </location>
</feature>
<feature type="domain" description="BTB" evidence="4">
    <location>
        <begin position="41"/>
        <end position="108"/>
    </location>
</feature>
<feature type="domain" description="BACK" evidence="3">
    <location>
        <begin position="143"/>
        <end position="245"/>
    </location>
</feature>
<feature type="repeat" description="Kelch 1" evidence="3">
    <location>
        <begin position="292"/>
        <end position="338"/>
    </location>
</feature>
<feature type="repeat" description="Kelch 2" evidence="3">
    <location>
        <begin position="340"/>
        <end position="386"/>
    </location>
</feature>
<feature type="repeat" description="Kelch 3" evidence="3">
    <location>
        <begin position="387"/>
        <end position="433"/>
    </location>
</feature>
<feature type="repeat" description="Kelch 4" evidence="3">
    <location>
        <begin position="435"/>
        <end position="480"/>
    </location>
</feature>
<feature type="repeat" description="Kelch 5" evidence="3">
    <location>
        <begin position="482"/>
        <end position="527"/>
    </location>
</feature>
<feature type="repeat" description="Kelch 6" evidence="3">
    <location>
        <begin position="528"/>
        <end position="574"/>
    </location>
</feature>
<feature type="region of interest" description="Disordered" evidence="5">
    <location>
        <begin position="1"/>
        <end position="22"/>
    </location>
</feature>
<organism>
    <name type="scientific">Aedes aegypti</name>
    <name type="common">Yellowfever mosquito</name>
    <name type="synonym">Culex aegypti</name>
    <dbReference type="NCBI Taxonomy" id="7159"/>
    <lineage>
        <taxon>Eukaryota</taxon>
        <taxon>Metazoa</taxon>
        <taxon>Ecdysozoa</taxon>
        <taxon>Arthropoda</taxon>
        <taxon>Hexapoda</taxon>
        <taxon>Insecta</taxon>
        <taxon>Pterygota</taxon>
        <taxon>Neoptera</taxon>
        <taxon>Endopterygota</taxon>
        <taxon>Diptera</taxon>
        <taxon>Nematocera</taxon>
        <taxon>Culicoidea</taxon>
        <taxon>Culicidae</taxon>
        <taxon>Culicinae</taxon>
        <taxon>Aedini</taxon>
        <taxon>Aedes</taxon>
        <taxon>Stegomyia</taxon>
    </lineage>
</organism>